<feature type="chain" id="PRO_0000372370" description="Uncharacterized protein C530.07c">
    <location>
        <begin position="1"/>
        <end position="242"/>
    </location>
</feature>
<reference key="1">
    <citation type="journal article" date="2002" name="Nature">
        <title>The genome sequence of Schizosaccharomyces pombe.</title>
        <authorList>
            <person name="Wood V."/>
            <person name="Gwilliam R."/>
            <person name="Rajandream M.A."/>
            <person name="Lyne M.H."/>
            <person name="Lyne R."/>
            <person name="Stewart A."/>
            <person name="Sgouros J.G."/>
            <person name="Peat N."/>
            <person name="Hayles J."/>
            <person name="Baker S.G."/>
            <person name="Basham D."/>
            <person name="Bowman S."/>
            <person name="Brooks K."/>
            <person name="Brown D."/>
            <person name="Brown S."/>
            <person name="Chillingworth T."/>
            <person name="Churcher C.M."/>
            <person name="Collins M."/>
            <person name="Connor R."/>
            <person name="Cronin A."/>
            <person name="Davis P."/>
            <person name="Feltwell T."/>
            <person name="Fraser A."/>
            <person name="Gentles S."/>
            <person name="Goble A."/>
            <person name="Hamlin N."/>
            <person name="Harris D.E."/>
            <person name="Hidalgo J."/>
            <person name="Hodgson G."/>
            <person name="Holroyd S."/>
            <person name="Hornsby T."/>
            <person name="Howarth S."/>
            <person name="Huckle E.J."/>
            <person name="Hunt S."/>
            <person name="Jagels K."/>
            <person name="James K.D."/>
            <person name="Jones L."/>
            <person name="Jones M."/>
            <person name="Leather S."/>
            <person name="McDonald S."/>
            <person name="McLean J."/>
            <person name="Mooney P."/>
            <person name="Moule S."/>
            <person name="Mungall K.L."/>
            <person name="Murphy L.D."/>
            <person name="Niblett D."/>
            <person name="Odell C."/>
            <person name="Oliver K."/>
            <person name="O'Neil S."/>
            <person name="Pearson D."/>
            <person name="Quail M.A."/>
            <person name="Rabbinowitsch E."/>
            <person name="Rutherford K.M."/>
            <person name="Rutter S."/>
            <person name="Saunders D."/>
            <person name="Seeger K."/>
            <person name="Sharp S."/>
            <person name="Skelton J."/>
            <person name="Simmonds M.N."/>
            <person name="Squares R."/>
            <person name="Squares S."/>
            <person name="Stevens K."/>
            <person name="Taylor K."/>
            <person name="Taylor R.G."/>
            <person name="Tivey A."/>
            <person name="Walsh S.V."/>
            <person name="Warren T."/>
            <person name="Whitehead S."/>
            <person name="Woodward J.R."/>
            <person name="Volckaert G."/>
            <person name="Aert R."/>
            <person name="Robben J."/>
            <person name="Grymonprez B."/>
            <person name="Weltjens I."/>
            <person name="Vanstreels E."/>
            <person name="Rieger M."/>
            <person name="Schaefer M."/>
            <person name="Mueller-Auer S."/>
            <person name="Gabel C."/>
            <person name="Fuchs M."/>
            <person name="Duesterhoeft A."/>
            <person name="Fritzc C."/>
            <person name="Holzer E."/>
            <person name="Moestl D."/>
            <person name="Hilbert H."/>
            <person name="Borzym K."/>
            <person name="Langer I."/>
            <person name="Beck A."/>
            <person name="Lehrach H."/>
            <person name="Reinhardt R."/>
            <person name="Pohl T.M."/>
            <person name="Eger P."/>
            <person name="Zimmermann W."/>
            <person name="Wedler H."/>
            <person name="Wambutt R."/>
            <person name="Purnelle B."/>
            <person name="Goffeau A."/>
            <person name="Cadieu E."/>
            <person name="Dreano S."/>
            <person name="Gloux S."/>
            <person name="Lelaure V."/>
            <person name="Mottier S."/>
            <person name="Galibert F."/>
            <person name="Aves S.J."/>
            <person name="Xiang Z."/>
            <person name="Hunt C."/>
            <person name="Moore K."/>
            <person name="Hurst S.M."/>
            <person name="Lucas M."/>
            <person name="Rochet M."/>
            <person name="Gaillardin C."/>
            <person name="Tallada V.A."/>
            <person name="Garzon A."/>
            <person name="Thode G."/>
            <person name="Daga R.R."/>
            <person name="Cruzado L."/>
            <person name="Jimenez J."/>
            <person name="Sanchez M."/>
            <person name="del Rey F."/>
            <person name="Benito J."/>
            <person name="Dominguez A."/>
            <person name="Revuelta J.L."/>
            <person name="Moreno S."/>
            <person name="Armstrong J."/>
            <person name="Forsburg S.L."/>
            <person name="Cerutti L."/>
            <person name="Lowe T."/>
            <person name="McCombie W.R."/>
            <person name="Paulsen I."/>
            <person name="Potashkin J."/>
            <person name="Shpakovski G.V."/>
            <person name="Ussery D."/>
            <person name="Barrell B.G."/>
            <person name="Nurse P."/>
        </authorList>
    </citation>
    <scope>NUCLEOTIDE SEQUENCE [LARGE SCALE GENOMIC DNA]</scope>
    <source>
        <strain>972 / ATCC 24843</strain>
    </source>
</reference>
<reference key="2">
    <citation type="journal article" date="2006" name="Nat. Biotechnol.">
        <title>ORFeome cloning and global analysis of protein localization in the fission yeast Schizosaccharomyces pombe.</title>
        <authorList>
            <person name="Matsuyama A."/>
            <person name="Arai R."/>
            <person name="Yashiroda Y."/>
            <person name="Shirai A."/>
            <person name="Kamata A."/>
            <person name="Sekido S."/>
            <person name="Kobayashi Y."/>
            <person name="Hashimoto A."/>
            <person name="Hamamoto M."/>
            <person name="Hiraoka Y."/>
            <person name="Horinouchi S."/>
            <person name="Yoshida M."/>
        </authorList>
    </citation>
    <scope>SUBCELLULAR LOCATION [LARGE SCALE ANALYSIS]</scope>
</reference>
<name>YN27_SCHPO</name>
<sequence>MDPYTVAIIKKLGIEEQVETAATKSPFIEGLANGTAPPGAFKRWLYEDRIYVQGCSLCLAKAINAITHEKGFPKEALDLFLGAYNVITPELAHFEARCKESNVEMPKLKPVPTSWEQALQDNKPEEYYHLSAPDCKSYIQFMTQELFEIPGTSGIDYFMAFYLNEVIYHRAWKFVRESKQFQKNCPEEMEFVKWWGQPSFGKFVENLARSIQDVPFTSATVDIAKKICNFEYRFFSTAFEKA</sequence>
<protein>
    <recommendedName>
        <fullName>Uncharacterized protein C530.07c</fullName>
    </recommendedName>
</protein>
<gene>
    <name type="ORF">SPBC530.07c</name>
</gene>
<accession>O59743</accession>
<dbReference type="EMBL" id="CU329671">
    <property type="protein sequence ID" value="CAA19173.1"/>
    <property type="molecule type" value="Genomic_DNA"/>
</dbReference>
<dbReference type="PIR" id="T40523">
    <property type="entry name" value="T40523"/>
</dbReference>
<dbReference type="RefSeq" id="NP_595320.1">
    <property type="nucleotide sequence ID" value="NM_001021227.2"/>
</dbReference>
<dbReference type="SMR" id="O59743"/>
<dbReference type="BioGRID" id="277406">
    <property type="interactions" value="1"/>
</dbReference>
<dbReference type="FunCoup" id="O59743">
    <property type="interactions" value="414"/>
</dbReference>
<dbReference type="STRING" id="284812.O59743"/>
<dbReference type="iPTMnet" id="O59743"/>
<dbReference type="PaxDb" id="4896-SPBC530.07c.1"/>
<dbReference type="EnsemblFungi" id="SPBC530.07c.1">
    <property type="protein sequence ID" value="SPBC530.07c.1:pep"/>
    <property type="gene ID" value="SPBC530.07c"/>
</dbReference>
<dbReference type="KEGG" id="spo:2540889"/>
<dbReference type="PomBase" id="SPBC530.07c"/>
<dbReference type="VEuPathDB" id="FungiDB:SPBC530.07c"/>
<dbReference type="HOGENOM" id="CLU_1147760_0_0_1"/>
<dbReference type="InParanoid" id="O59743"/>
<dbReference type="OMA" id="SPACYEY"/>
<dbReference type="PRO" id="PR:O59743"/>
<dbReference type="Proteomes" id="UP000002485">
    <property type="component" value="Chromosome II"/>
</dbReference>
<dbReference type="GO" id="GO:0005829">
    <property type="term" value="C:cytosol"/>
    <property type="evidence" value="ECO:0007005"/>
    <property type="project" value="PomBase"/>
</dbReference>
<dbReference type="GO" id="GO:0005634">
    <property type="term" value="C:nucleus"/>
    <property type="evidence" value="ECO:0007005"/>
    <property type="project" value="PomBase"/>
</dbReference>
<dbReference type="GO" id="GO:0003824">
    <property type="term" value="F:catalytic activity"/>
    <property type="evidence" value="ECO:0000255"/>
    <property type="project" value="PomBase"/>
</dbReference>
<dbReference type="CDD" id="cd19357">
    <property type="entry name" value="TenA_E_At3g16990-like"/>
    <property type="match status" value="1"/>
</dbReference>
<dbReference type="Gene3D" id="1.20.910.10">
    <property type="entry name" value="Heme oxygenase-like"/>
    <property type="match status" value="1"/>
</dbReference>
<dbReference type="InterPro" id="IPR016084">
    <property type="entry name" value="Haem_Oase-like_multi-hlx"/>
</dbReference>
<dbReference type="InterPro" id="IPR050967">
    <property type="entry name" value="Thiamine_Salvage_TenA"/>
</dbReference>
<dbReference type="PANTHER" id="PTHR43198">
    <property type="entry name" value="BIFUNCTIONAL TH2 PROTEIN"/>
    <property type="match status" value="1"/>
</dbReference>
<dbReference type="PANTHER" id="PTHR43198:SF2">
    <property type="entry name" value="SI:CH1073-67J19.1-RELATED"/>
    <property type="match status" value="1"/>
</dbReference>
<dbReference type="SUPFAM" id="SSF48613">
    <property type="entry name" value="Heme oxygenase-like"/>
    <property type="match status" value="1"/>
</dbReference>
<organism>
    <name type="scientific">Schizosaccharomyces pombe (strain 972 / ATCC 24843)</name>
    <name type="common">Fission yeast</name>
    <dbReference type="NCBI Taxonomy" id="284812"/>
    <lineage>
        <taxon>Eukaryota</taxon>
        <taxon>Fungi</taxon>
        <taxon>Dikarya</taxon>
        <taxon>Ascomycota</taxon>
        <taxon>Taphrinomycotina</taxon>
        <taxon>Schizosaccharomycetes</taxon>
        <taxon>Schizosaccharomycetales</taxon>
        <taxon>Schizosaccharomycetaceae</taxon>
        <taxon>Schizosaccharomyces</taxon>
    </lineage>
</organism>
<proteinExistence type="predicted"/>
<comment type="subcellular location">
    <subcellularLocation>
        <location evidence="1">Cytoplasm</location>
    </subcellularLocation>
    <subcellularLocation>
        <location evidence="1">Nucleus</location>
    </subcellularLocation>
</comment>
<evidence type="ECO:0000269" key="1">
    <source>
    </source>
</evidence>
<keyword id="KW-0963">Cytoplasm</keyword>
<keyword id="KW-0539">Nucleus</keyword>
<keyword id="KW-1185">Reference proteome</keyword>